<feature type="chain" id="PRO_0000288734" description="Glutaredoxin 1">
    <location>
        <begin position="1"/>
        <end position="98"/>
    </location>
</feature>
<feature type="domain" description="Glutaredoxin" evidence="2">
    <location>
        <begin position="1"/>
        <end position="98"/>
    </location>
</feature>
<feature type="disulfide bond" description="Redox-active" evidence="1">
    <location>
        <begin position="17"/>
        <end position="20"/>
    </location>
</feature>
<reference key="1">
    <citation type="journal article" date="2006" name="PLoS Genet.">
        <title>Genome sequence of Rickettsia bellii illuminates the role of amoebae in gene exchanges between intracellular pathogens.</title>
        <authorList>
            <person name="Ogata H."/>
            <person name="La Scola B."/>
            <person name="Audic S."/>
            <person name="Renesto P."/>
            <person name="Blanc G."/>
            <person name="Robert C."/>
            <person name="Fournier P.-E."/>
            <person name="Claverie J.-M."/>
            <person name="Raoult D."/>
        </authorList>
    </citation>
    <scope>NUCLEOTIDE SEQUENCE [LARGE SCALE GENOMIC DNA]</scope>
    <source>
        <strain>RML369-C</strain>
    </source>
</reference>
<gene>
    <name type="primary">grxC1</name>
    <name type="synonym">grx</name>
    <name type="ordered locus">RBE_1093</name>
</gene>
<organism>
    <name type="scientific">Rickettsia bellii (strain RML369-C)</name>
    <dbReference type="NCBI Taxonomy" id="336407"/>
    <lineage>
        <taxon>Bacteria</taxon>
        <taxon>Pseudomonadati</taxon>
        <taxon>Pseudomonadota</taxon>
        <taxon>Alphaproteobacteria</taxon>
        <taxon>Rickettsiales</taxon>
        <taxon>Rickettsiaceae</taxon>
        <taxon>Rickettsieae</taxon>
        <taxon>Rickettsia</taxon>
        <taxon>belli group</taxon>
    </lineage>
</organism>
<name>GLRX1_RICBR</name>
<evidence type="ECO:0000250" key="1"/>
<evidence type="ECO:0000255" key="2">
    <source>
        <dbReference type="PROSITE-ProRule" id="PRU00686"/>
    </source>
</evidence>
<evidence type="ECO:0000305" key="3"/>
<protein>
    <recommendedName>
        <fullName>Glutaredoxin 1</fullName>
    </recommendedName>
</protein>
<keyword id="KW-0963">Cytoplasm</keyword>
<keyword id="KW-1015">Disulfide bond</keyword>
<keyword id="KW-0249">Electron transport</keyword>
<keyword id="KW-0676">Redox-active center</keyword>
<keyword id="KW-0813">Transport</keyword>
<dbReference type="EMBL" id="CP000087">
    <property type="protein sequence ID" value="ABE05174.1"/>
    <property type="molecule type" value="Genomic_DNA"/>
</dbReference>
<dbReference type="SMR" id="Q1RHJ0"/>
<dbReference type="KEGG" id="rbe:RBE_1093"/>
<dbReference type="eggNOG" id="COG0695">
    <property type="taxonomic scope" value="Bacteria"/>
</dbReference>
<dbReference type="HOGENOM" id="CLU_026126_7_3_5"/>
<dbReference type="OrthoDB" id="9814618at2"/>
<dbReference type="Proteomes" id="UP000001951">
    <property type="component" value="Chromosome"/>
</dbReference>
<dbReference type="GO" id="GO:0005737">
    <property type="term" value="C:cytoplasm"/>
    <property type="evidence" value="ECO:0007669"/>
    <property type="project" value="UniProtKB-SubCell"/>
</dbReference>
<dbReference type="GO" id="GO:0015035">
    <property type="term" value="F:protein-disulfide reductase activity"/>
    <property type="evidence" value="ECO:0007669"/>
    <property type="project" value="TreeGrafter"/>
</dbReference>
<dbReference type="GO" id="GO:0045454">
    <property type="term" value="P:cell redox homeostasis"/>
    <property type="evidence" value="ECO:0007669"/>
    <property type="project" value="InterPro"/>
</dbReference>
<dbReference type="CDD" id="cd03418">
    <property type="entry name" value="GRX_GRXb_1_3_like"/>
    <property type="match status" value="1"/>
</dbReference>
<dbReference type="Gene3D" id="3.40.30.10">
    <property type="entry name" value="Glutaredoxin"/>
    <property type="match status" value="1"/>
</dbReference>
<dbReference type="InterPro" id="IPR011767">
    <property type="entry name" value="GLR_AS"/>
</dbReference>
<dbReference type="InterPro" id="IPR002109">
    <property type="entry name" value="Glutaredoxin"/>
</dbReference>
<dbReference type="InterPro" id="IPR014025">
    <property type="entry name" value="Glutaredoxin_subgr"/>
</dbReference>
<dbReference type="InterPro" id="IPR011900">
    <property type="entry name" value="GRX_bact"/>
</dbReference>
<dbReference type="InterPro" id="IPR036249">
    <property type="entry name" value="Thioredoxin-like_sf"/>
</dbReference>
<dbReference type="NCBIfam" id="TIGR02181">
    <property type="entry name" value="GRX_bact"/>
    <property type="match status" value="1"/>
</dbReference>
<dbReference type="PANTHER" id="PTHR46679">
    <property type="match status" value="1"/>
</dbReference>
<dbReference type="PANTHER" id="PTHR46679:SF1">
    <property type="entry name" value="GLUTAREDOXIN-2, MITOCHONDRIAL"/>
    <property type="match status" value="1"/>
</dbReference>
<dbReference type="Pfam" id="PF00462">
    <property type="entry name" value="Glutaredoxin"/>
    <property type="match status" value="1"/>
</dbReference>
<dbReference type="PRINTS" id="PR00160">
    <property type="entry name" value="GLUTAREDOXIN"/>
</dbReference>
<dbReference type="SUPFAM" id="SSF52833">
    <property type="entry name" value="Thioredoxin-like"/>
    <property type="match status" value="1"/>
</dbReference>
<dbReference type="PROSITE" id="PS00195">
    <property type="entry name" value="GLUTAREDOXIN_1"/>
    <property type="match status" value="1"/>
</dbReference>
<dbReference type="PROSITE" id="PS51354">
    <property type="entry name" value="GLUTAREDOXIN_2"/>
    <property type="match status" value="1"/>
</dbReference>
<sequence>MNKAILHAIIIYTLAGCPYCMKAKALLDKKEVAYEEIEVQNSQDPNVAVLRKKLNNPDRLTFPQIFIDNMHIGGCDDLYDLDKEGRLDKLLEGQPKKD</sequence>
<comment type="function">
    <text evidence="1">Has a glutathione-disulfide oxidoreductase activity in the presence of NADPH and glutathione reductase. Reduces low molecular weight disulfides and proteins (By similarity).</text>
</comment>
<comment type="subunit">
    <text evidence="1">Monomer.</text>
</comment>
<comment type="subcellular location">
    <subcellularLocation>
        <location evidence="1">Cytoplasm</location>
    </subcellularLocation>
</comment>
<comment type="similarity">
    <text evidence="3">Belongs to the glutaredoxin family.</text>
</comment>
<proteinExistence type="inferred from homology"/>
<accession>Q1RHJ0</accession>